<dbReference type="EC" id="2.4.2.9" evidence="1"/>
<dbReference type="EMBL" id="CP000745">
    <property type="protein sequence ID" value="ABR66760.1"/>
    <property type="molecule type" value="Genomic_DNA"/>
</dbReference>
<dbReference type="SMR" id="A6VJY4"/>
<dbReference type="STRING" id="426368.MmarC7_1704"/>
<dbReference type="KEGG" id="mmz:MmarC7_1704"/>
<dbReference type="eggNOG" id="arCOG04128">
    <property type="taxonomic scope" value="Archaea"/>
</dbReference>
<dbReference type="HOGENOM" id="CLU_067096_2_0_2"/>
<dbReference type="OrthoDB" id="80352at2157"/>
<dbReference type="UniPathway" id="UPA00574">
    <property type="reaction ID" value="UER00636"/>
</dbReference>
<dbReference type="GO" id="GO:0005525">
    <property type="term" value="F:GTP binding"/>
    <property type="evidence" value="ECO:0007669"/>
    <property type="project" value="UniProtKB-KW"/>
</dbReference>
<dbReference type="GO" id="GO:0000287">
    <property type="term" value="F:magnesium ion binding"/>
    <property type="evidence" value="ECO:0007669"/>
    <property type="project" value="UniProtKB-UniRule"/>
</dbReference>
<dbReference type="GO" id="GO:0004845">
    <property type="term" value="F:uracil phosphoribosyltransferase activity"/>
    <property type="evidence" value="ECO:0007669"/>
    <property type="project" value="UniProtKB-UniRule"/>
</dbReference>
<dbReference type="GO" id="GO:0044206">
    <property type="term" value="P:UMP salvage"/>
    <property type="evidence" value="ECO:0007669"/>
    <property type="project" value="UniProtKB-UniRule"/>
</dbReference>
<dbReference type="GO" id="GO:0006223">
    <property type="term" value="P:uracil salvage"/>
    <property type="evidence" value="ECO:0007669"/>
    <property type="project" value="InterPro"/>
</dbReference>
<dbReference type="CDD" id="cd06223">
    <property type="entry name" value="PRTases_typeI"/>
    <property type="match status" value="1"/>
</dbReference>
<dbReference type="Gene3D" id="3.40.50.2020">
    <property type="match status" value="1"/>
</dbReference>
<dbReference type="HAMAP" id="MF_01218_A">
    <property type="entry name" value="Upp_A"/>
    <property type="match status" value="1"/>
</dbReference>
<dbReference type="InterPro" id="IPR000836">
    <property type="entry name" value="PRibTrfase_dom"/>
</dbReference>
<dbReference type="InterPro" id="IPR029057">
    <property type="entry name" value="PRTase-like"/>
</dbReference>
<dbReference type="InterPro" id="IPR034331">
    <property type="entry name" value="Upp_A"/>
</dbReference>
<dbReference type="InterPro" id="IPR005765">
    <property type="entry name" value="Ura_phspho_trans"/>
</dbReference>
<dbReference type="NCBIfam" id="NF001097">
    <property type="entry name" value="PRK00129.1"/>
    <property type="match status" value="1"/>
</dbReference>
<dbReference type="NCBIfam" id="TIGR01091">
    <property type="entry name" value="upp"/>
    <property type="match status" value="1"/>
</dbReference>
<dbReference type="Pfam" id="PF14681">
    <property type="entry name" value="UPRTase"/>
    <property type="match status" value="1"/>
</dbReference>
<dbReference type="SUPFAM" id="SSF53271">
    <property type="entry name" value="PRTase-like"/>
    <property type="match status" value="1"/>
</dbReference>
<proteinExistence type="inferred from homology"/>
<comment type="function">
    <text evidence="1">Catalyzes the conversion of uracil and 5-phospho-alpha-D-ribose 1-diphosphate (PRPP) to UMP and diphosphate.</text>
</comment>
<comment type="catalytic activity">
    <reaction evidence="1">
        <text>UMP + diphosphate = 5-phospho-alpha-D-ribose 1-diphosphate + uracil</text>
        <dbReference type="Rhea" id="RHEA:13017"/>
        <dbReference type="ChEBI" id="CHEBI:17568"/>
        <dbReference type="ChEBI" id="CHEBI:33019"/>
        <dbReference type="ChEBI" id="CHEBI:57865"/>
        <dbReference type="ChEBI" id="CHEBI:58017"/>
        <dbReference type="EC" id="2.4.2.9"/>
    </reaction>
</comment>
<comment type="cofactor">
    <cofactor evidence="1">
        <name>Mg(2+)</name>
        <dbReference type="ChEBI" id="CHEBI:18420"/>
    </cofactor>
    <text evidence="1">Binds 1 Mg(2+) ion per subunit. The magnesium is bound as Mg-PRPP.</text>
</comment>
<comment type="activity regulation">
    <text evidence="1">Allosterically activated by GTP.</text>
</comment>
<comment type="pathway">
    <text evidence="1">Pyrimidine metabolism; UMP biosynthesis via salvage pathway; UMP from uracil: step 1/1.</text>
</comment>
<comment type="similarity">
    <text evidence="1">Belongs to the UPRTase family.</text>
</comment>
<reference key="1">
    <citation type="submission" date="2007-06" db="EMBL/GenBank/DDBJ databases">
        <title>Complete sequence of Methanococcus maripaludis C7.</title>
        <authorList>
            <consortium name="US DOE Joint Genome Institute"/>
            <person name="Copeland A."/>
            <person name="Lucas S."/>
            <person name="Lapidus A."/>
            <person name="Barry K."/>
            <person name="Glavina del Rio T."/>
            <person name="Dalin E."/>
            <person name="Tice H."/>
            <person name="Pitluck S."/>
            <person name="Clum A."/>
            <person name="Schmutz J."/>
            <person name="Larimer F."/>
            <person name="Land M."/>
            <person name="Hauser L."/>
            <person name="Kyrpides N."/>
            <person name="Anderson I."/>
            <person name="Sieprawska-Lupa M."/>
            <person name="Whitman W.B."/>
            <person name="Richardson P."/>
        </authorList>
    </citation>
    <scope>NUCLEOTIDE SEQUENCE [LARGE SCALE GENOMIC DNA]</scope>
    <source>
        <strain>C7 / ATCC BAA-1331</strain>
    </source>
</reference>
<protein>
    <recommendedName>
        <fullName evidence="1">Uracil phosphoribosyltransferase</fullName>
        <ecNumber evidence="1">2.4.2.9</ecNumber>
    </recommendedName>
    <alternativeName>
        <fullName evidence="1">UMP pyrophosphorylase</fullName>
    </alternativeName>
    <alternativeName>
        <fullName evidence="1">UPRTase</fullName>
    </alternativeName>
</protein>
<gene>
    <name evidence="1" type="primary">upp</name>
    <name type="ordered locus">MmarC7_1704</name>
</gene>
<sequence>MIKDERWEGVYSFEDSPYLMETLTDLRKISTENISFRKGLVRLGRYMGYELTKTMEFEKMPIQTPLEKTEGIFSKDRKNVVIITILRAAFPLMEGLIKNFESAKVGIVSASRGHAPDFKIEMNYIKVPQLNSEDTVIISDPMIATGSTLIRVLNEFKDSKPKRMLIVGVLAAPEGINAVKAEFPDVEIFVTKIDEKLNKDGYIVPGLGDAGDRAFGEPYKVSMLPQMHNLE</sequence>
<organism>
    <name type="scientific">Methanococcus maripaludis (strain C7 / ATCC BAA-1331)</name>
    <dbReference type="NCBI Taxonomy" id="426368"/>
    <lineage>
        <taxon>Archaea</taxon>
        <taxon>Methanobacteriati</taxon>
        <taxon>Methanobacteriota</taxon>
        <taxon>Methanomada group</taxon>
        <taxon>Methanococci</taxon>
        <taxon>Methanococcales</taxon>
        <taxon>Methanococcaceae</taxon>
        <taxon>Methanococcus</taxon>
    </lineage>
</organism>
<name>UPP_METM7</name>
<feature type="chain" id="PRO_1000053740" description="Uracil phosphoribosyltransferase">
    <location>
        <begin position="1"/>
        <end position="231"/>
    </location>
</feature>
<feature type="binding site" evidence="1">
    <location>
        <begin position="38"/>
        <end position="42"/>
    </location>
    <ligand>
        <name>GTP</name>
        <dbReference type="ChEBI" id="CHEBI:37565"/>
    </ligand>
</feature>
<feature type="binding site" evidence="1">
    <location>
        <position position="87"/>
    </location>
    <ligand>
        <name>5-phospho-alpha-D-ribose 1-diphosphate</name>
        <dbReference type="ChEBI" id="CHEBI:58017"/>
    </ligand>
</feature>
<feature type="binding site" evidence="1">
    <location>
        <position position="112"/>
    </location>
    <ligand>
        <name>5-phospho-alpha-D-ribose 1-diphosphate</name>
        <dbReference type="ChEBI" id="CHEBI:58017"/>
    </ligand>
</feature>
<feature type="binding site" evidence="1">
    <location>
        <begin position="140"/>
        <end position="148"/>
    </location>
    <ligand>
        <name>5-phospho-alpha-D-ribose 1-diphosphate</name>
        <dbReference type="ChEBI" id="CHEBI:58017"/>
    </ligand>
</feature>
<feature type="binding site" evidence="1">
    <location>
        <position position="203"/>
    </location>
    <ligand>
        <name>uracil</name>
        <dbReference type="ChEBI" id="CHEBI:17568"/>
    </ligand>
</feature>
<feature type="binding site" evidence="1">
    <location>
        <begin position="208"/>
        <end position="210"/>
    </location>
    <ligand>
        <name>uracil</name>
        <dbReference type="ChEBI" id="CHEBI:17568"/>
    </ligand>
</feature>
<feature type="binding site" evidence="1">
    <location>
        <position position="209"/>
    </location>
    <ligand>
        <name>5-phospho-alpha-D-ribose 1-diphosphate</name>
        <dbReference type="ChEBI" id="CHEBI:58017"/>
    </ligand>
</feature>
<keyword id="KW-0021">Allosteric enzyme</keyword>
<keyword id="KW-0328">Glycosyltransferase</keyword>
<keyword id="KW-0342">GTP-binding</keyword>
<keyword id="KW-0460">Magnesium</keyword>
<keyword id="KW-0547">Nucleotide-binding</keyword>
<keyword id="KW-0808">Transferase</keyword>
<evidence type="ECO:0000255" key="1">
    <source>
        <dbReference type="HAMAP-Rule" id="MF_01218"/>
    </source>
</evidence>
<accession>A6VJY4</accession>